<protein>
    <recommendedName>
        <fullName evidence="2">GTP cyclohydrolase 1</fullName>
        <ecNumber evidence="2">3.5.4.16</ecNumber>
    </recommendedName>
    <alternativeName>
        <fullName evidence="2">GTP cyclohydrolase I</fullName>
        <shortName evidence="2">GTP-CH-I</shortName>
    </alternativeName>
</protein>
<accession>Q1QV64</accession>
<organism>
    <name type="scientific">Chromohalobacter salexigens (strain ATCC BAA-138 / DSM 3043 / CIP 106854 / NCIMB 13768 / 1H11)</name>
    <dbReference type="NCBI Taxonomy" id="290398"/>
    <lineage>
        <taxon>Bacteria</taxon>
        <taxon>Pseudomonadati</taxon>
        <taxon>Pseudomonadota</taxon>
        <taxon>Gammaproteobacteria</taxon>
        <taxon>Oceanospirillales</taxon>
        <taxon>Halomonadaceae</taxon>
        <taxon>Chromohalobacter</taxon>
    </lineage>
</organism>
<proteinExistence type="inferred from homology"/>
<dbReference type="EC" id="3.5.4.16" evidence="2"/>
<dbReference type="EMBL" id="CP000285">
    <property type="protein sequence ID" value="ABE59644.1"/>
    <property type="molecule type" value="Genomic_DNA"/>
</dbReference>
<dbReference type="RefSeq" id="WP_011507590.1">
    <property type="nucleotide sequence ID" value="NC_007963.1"/>
</dbReference>
<dbReference type="SMR" id="Q1QV64"/>
<dbReference type="STRING" id="290398.Csal_2294"/>
<dbReference type="GeneID" id="95335005"/>
<dbReference type="KEGG" id="csa:Csal_2294"/>
<dbReference type="eggNOG" id="COG0302">
    <property type="taxonomic scope" value="Bacteria"/>
</dbReference>
<dbReference type="HOGENOM" id="CLU_049768_3_1_6"/>
<dbReference type="OrthoDB" id="9801207at2"/>
<dbReference type="UniPathway" id="UPA00848">
    <property type="reaction ID" value="UER00151"/>
</dbReference>
<dbReference type="Proteomes" id="UP000000239">
    <property type="component" value="Chromosome"/>
</dbReference>
<dbReference type="GO" id="GO:0005737">
    <property type="term" value="C:cytoplasm"/>
    <property type="evidence" value="ECO:0007669"/>
    <property type="project" value="TreeGrafter"/>
</dbReference>
<dbReference type="GO" id="GO:0005525">
    <property type="term" value="F:GTP binding"/>
    <property type="evidence" value="ECO:0007669"/>
    <property type="project" value="UniProtKB-KW"/>
</dbReference>
<dbReference type="GO" id="GO:0003934">
    <property type="term" value="F:GTP cyclohydrolase I activity"/>
    <property type="evidence" value="ECO:0007669"/>
    <property type="project" value="UniProtKB-UniRule"/>
</dbReference>
<dbReference type="GO" id="GO:0008270">
    <property type="term" value="F:zinc ion binding"/>
    <property type="evidence" value="ECO:0007669"/>
    <property type="project" value="UniProtKB-UniRule"/>
</dbReference>
<dbReference type="GO" id="GO:0006730">
    <property type="term" value="P:one-carbon metabolic process"/>
    <property type="evidence" value="ECO:0007669"/>
    <property type="project" value="UniProtKB-UniRule"/>
</dbReference>
<dbReference type="GO" id="GO:0006729">
    <property type="term" value="P:tetrahydrobiopterin biosynthetic process"/>
    <property type="evidence" value="ECO:0007669"/>
    <property type="project" value="TreeGrafter"/>
</dbReference>
<dbReference type="GO" id="GO:0046654">
    <property type="term" value="P:tetrahydrofolate biosynthetic process"/>
    <property type="evidence" value="ECO:0007669"/>
    <property type="project" value="UniProtKB-UniRule"/>
</dbReference>
<dbReference type="FunFam" id="3.30.1130.10:FF:000001">
    <property type="entry name" value="GTP cyclohydrolase 1"/>
    <property type="match status" value="1"/>
</dbReference>
<dbReference type="Gene3D" id="1.10.286.10">
    <property type="match status" value="1"/>
</dbReference>
<dbReference type="Gene3D" id="3.30.1130.10">
    <property type="match status" value="1"/>
</dbReference>
<dbReference type="HAMAP" id="MF_00223">
    <property type="entry name" value="FolE"/>
    <property type="match status" value="1"/>
</dbReference>
<dbReference type="InterPro" id="IPR043133">
    <property type="entry name" value="GTP-CH-I_C/QueF"/>
</dbReference>
<dbReference type="InterPro" id="IPR043134">
    <property type="entry name" value="GTP-CH-I_N"/>
</dbReference>
<dbReference type="InterPro" id="IPR001474">
    <property type="entry name" value="GTP_CycHdrlase_I"/>
</dbReference>
<dbReference type="InterPro" id="IPR018234">
    <property type="entry name" value="GTP_CycHdrlase_I_CS"/>
</dbReference>
<dbReference type="InterPro" id="IPR020602">
    <property type="entry name" value="GTP_CycHdrlase_I_dom"/>
</dbReference>
<dbReference type="NCBIfam" id="TIGR00063">
    <property type="entry name" value="folE"/>
    <property type="match status" value="1"/>
</dbReference>
<dbReference type="NCBIfam" id="NF006825">
    <property type="entry name" value="PRK09347.1-2"/>
    <property type="match status" value="1"/>
</dbReference>
<dbReference type="NCBIfam" id="NF006826">
    <property type="entry name" value="PRK09347.1-3"/>
    <property type="match status" value="1"/>
</dbReference>
<dbReference type="PANTHER" id="PTHR11109:SF7">
    <property type="entry name" value="GTP CYCLOHYDROLASE 1"/>
    <property type="match status" value="1"/>
</dbReference>
<dbReference type="PANTHER" id="PTHR11109">
    <property type="entry name" value="GTP CYCLOHYDROLASE I"/>
    <property type="match status" value="1"/>
</dbReference>
<dbReference type="Pfam" id="PF01227">
    <property type="entry name" value="GTP_cyclohydroI"/>
    <property type="match status" value="1"/>
</dbReference>
<dbReference type="SUPFAM" id="SSF55620">
    <property type="entry name" value="Tetrahydrobiopterin biosynthesis enzymes-like"/>
    <property type="match status" value="1"/>
</dbReference>
<dbReference type="PROSITE" id="PS00859">
    <property type="entry name" value="GTP_CYCLOHYDROL_1_1"/>
    <property type="match status" value="1"/>
</dbReference>
<dbReference type="PROSITE" id="PS00860">
    <property type="entry name" value="GTP_CYCLOHYDROL_1_2"/>
    <property type="match status" value="1"/>
</dbReference>
<feature type="chain" id="PRO_1000043676" description="GTP cyclohydrolase 1">
    <location>
        <begin position="1"/>
        <end position="184"/>
    </location>
</feature>
<feature type="binding site" evidence="2">
    <location>
        <position position="75"/>
    </location>
    <ligand>
        <name>Zn(2+)</name>
        <dbReference type="ChEBI" id="CHEBI:29105"/>
    </ligand>
</feature>
<feature type="binding site" evidence="2">
    <location>
        <position position="78"/>
    </location>
    <ligand>
        <name>Zn(2+)</name>
        <dbReference type="ChEBI" id="CHEBI:29105"/>
    </ligand>
</feature>
<feature type="binding site" evidence="2">
    <location>
        <position position="146"/>
    </location>
    <ligand>
        <name>Zn(2+)</name>
        <dbReference type="ChEBI" id="CHEBI:29105"/>
    </ligand>
</feature>
<gene>
    <name evidence="2" type="primary">folE</name>
    <name type="ordered locus">Csal_2294</name>
</gene>
<comment type="catalytic activity">
    <reaction evidence="2">
        <text>GTP + H2O = 7,8-dihydroneopterin 3'-triphosphate + formate + H(+)</text>
        <dbReference type="Rhea" id="RHEA:17473"/>
        <dbReference type="ChEBI" id="CHEBI:15377"/>
        <dbReference type="ChEBI" id="CHEBI:15378"/>
        <dbReference type="ChEBI" id="CHEBI:15740"/>
        <dbReference type="ChEBI" id="CHEBI:37565"/>
        <dbReference type="ChEBI" id="CHEBI:58462"/>
        <dbReference type="EC" id="3.5.4.16"/>
    </reaction>
</comment>
<comment type="pathway">
    <text evidence="2">Cofactor biosynthesis; 7,8-dihydroneopterin triphosphate biosynthesis; 7,8-dihydroneopterin triphosphate from GTP: step 1/1.</text>
</comment>
<comment type="subunit">
    <text evidence="1">Toroid-shaped homodecamer, composed of two pentamers of five dimers.</text>
</comment>
<comment type="similarity">
    <text evidence="2">Belongs to the GTP cyclohydrolase I family.</text>
</comment>
<evidence type="ECO:0000250" key="1"/>
<evidence type="ECO:0000255" key="2">
    <source>
        <dbReference type="HAMAP-Rule" id="MF_00223"/>
    </source>
</evidence>
<keyword id="KW-0342">GTP-binding</keyword>
<keyword id="KW-0378">Hydrolase</keyword>
<keyword id="KW-0479">Metal-binding</keyword>
<keyword id="KW-0547">Nucleotide-binding</keyword>
<keyword id="KW-0554">One-carbon metabolism</keyword>
<keyword id="KW-1185">Reference proteome</keyword>
<keyword id="KW-0862">Zinc</keyword>
<reference key="1">
    <citation type="journal article" date="2011" name="Stand. Genomic Sci.">
        <title>Complete genome sequence of the halophilic and highly halotolerant Chromohalobacter salexigens type strain (1H11(T)).</title>
        <authorList>
            <person name="Copeland A."/>
            <person name="O'Connor K."/>
            <person name="Lucas S."/>
            <person name="Lapidus A."/>
            <person name="Berry K.W."/>
            <person name="Detter J.C."/>
            <person name="Del Rio T.G."/>
            <person name="Hammon N."/>
            <person name="Dalin E."/>
            <person name="Tice H."/>
            <person name="Pitluck S."/>
            <person name="Bruce D."/>
            <person name="Goodwin L."/>
            <person name="Han C."/>
            <person name="Tapia R."/>
            <person name="Saunders E."/>
            <person name="Schmutz J."/>
            <person name="Brettin T."/>
            <person name="Larimer F."/>
            <person name="Land M."/>
            <person name="Hauser L."/>
            <person name="Vargas C."/>
            <person name="Nieto J.J."/>
            <person name="Kyrpides N.C."/>
            <person name="Ivanova N."/>
            <person name="Goker M."/>
            <person name="Klenk H.P."/>
            <person name="Csonka L.N."/>
            <person name="Woyke T."/>
        </authorList>
    </citation>
    <scope>NUCLEOTIDE SEQUENCE [LARGE SCALE GENOMIC DNA]</scope>
    <source>
        <strain>ATCC BAA-138 / DSM 3043 / CIP 106854 / NCIMB 13768 / 1H11</strain>
    </source>
</reference>
<name>GCH1_CHRSD</name>
<sequence>MTEELADNYRHIIAGLGEDPDREGLRDTPKRAAKAMQFLTQGYGQTLESLVNGAVFESQTDEMVLIKDIELYSMCEHHLLPFIGKCHIAYLPEGRVLGLSKFARIVDMYARRMQIQENLTRQIAEAVQQVTQARGVGVIIEAQHMCMMMRGVEKQNSSMKTSVMLGAFRNNLTTRQEFLTLVHG</sequence>